<name>MURQ_BACAA</name>
<proteinExistence type="inferred from homology"/>
<evidence type="ECO:0000255" key="1">
    <source>
        <dbReference type="HAMAP-Rule" id="MF_00068"/>
    </source>
</evidence>
<protein>
    <recommendedName>
        <fullName evidence="1">N-acetylmuramic acid 6-phosphate etherase</fullName>
        <shortName evidence="1">MurNAc-6-P etherase</shortName>
        <ecNumber evidence="1">4.2.1.126</ecNumber>
    </recommendedName>
    <alternativeName>
        <fullName evidence="1">N-acetylmuramic acid 6-phosphate hydrolase</fullName>
    </alternativeName>
    <alternativeName>
        <fullName evidence="1">N-acetylmuramic acid 6-phosphate lyase</fullName>
    </alternativeName>
</protein>
<dbReference type="EC" id="4.2.1.126" evidence="1"/>
<dbReference type="EMBL" id="CP001598">
    <property type="protein sequence ID" value="ACQ50372.1"/>
    <property type="molecule type" value="Genomic_DNA"/>
</dbReference>
<dbReference type="RefSeq" id="WP_000892332.1">
    <property type="nucleotide sequence ID" value="NC_012659.1"/>
</dbReference>
<dbReference type="SMR" id="C3P1J8"/>
<dbReference type="GeneID" id="45020894"/>
<dbReference type="KEGG" id="bai:BAA_0931"/>
<dbReference type="HOGENOM" id="CLU_049049_1_1_9"/>
<dbReference type="UniPathway" id="UPA00342"/>
<dbReference type="GO" id="GO:0097367">
    <property type="term" value="F:carbohydrate derivative binding"/>
    <property type="evidence" value="ECO:0007669"/>
    <property type="project" value="InterPro"/>
</dbReference>
<dbReference type="GO" id="GO:0016835">
    <property type="term" value="F:carbon-oxygen lyase activity"/>
    <property type="evidence" value="ECO:0007669"/>
    <property type="project" value="UniProtKB-UniRule"/>
</dbReference>
<dbReference type="GO" id="GO:0016803">
    <property type="term" value="F:ether hydrolase activity"/>
    <property type="evidence" value="ECO:0007669"/>
    <property type="project" value="TreeGrafter"/>
</dbReference>
<dbReference type="GO" id="GO:0046348">
    <property type="term" value="P:amino sugar catabolic process"/>
    <property type="evidence" value="ECO:0007669"/>
    <property type="project" value="InterPro"/>
</dbReference>
<dbReference type="GO" id="GO:0097173">
    <property type="term" value="P:N-acetylmuramic acid catabolic process"/>
    <property type="evidence" value="ECO:0007669"/>
    <property type="project" value="UniProtKB-UniPathway"/>
</dbReference>
<dbReference type="GO" id="GO:0009254">
    <property type="term" value="P:peptidoglycan turnover"/>
    <property type="evidence" value="ECO:0007669"/>
    <property type="project" value="TreeGrafter"/>
</dbReference>
<dbReference type="CDD" id="cd05007">
    <property type="entry name" value="SIS_Etherase"/>
    <property type="match status" value="1"/>
</dbReference>
<dbReference type="FunFam" id="1.10.8.1080:FF:000001">
    <property type="entry name" value="N-acetylmuramic acid 6-phosphate etherase"/>
    <property type="match status" value="1"/>
</dbReference>
<dbReference type="FunFam" id="3.40.50.10490:FF:000014">
    <property type="entry name" value="N-acetylmuramic acid 6-phosphate etherase"/>
    <property type="match status" value="1"/>
</dbReference>
<dbReference type="Gene3D" id="1.10.8.1080">
    <property type="match status" value="1"/>
</dbReference>
<dbReference type="Gene3D" id="3.40.50.10490">
    <property type="entry name" value="Glucose-6-phosphate isomerase like protein, domain 1"/>
    <property type="match status" value="1"/>
</dbReference>
<dbReference type="HAMAP" id="MF_00068">
    <property type="entry name" value="MurQ"/>
    <property type="match status" value="1"/>
</dbReference>
<dbReference type="InterPro" id="IPR005488">
    <property type="entry name" value="Etherase_MurQ"/>
</dbReference>
<dbReference type="InterPro" id="IPR005486">
    <property type="entry name" value="Glucokinase_regulatory_CS"/>
</dbReference>
<dbReference type="InterPro" id="IPR040190">
    <property type="entry name" value="MURQ/GCKR"/>
</dbReference>
<dbReference type="InterPro" id="IPR001347">
    <property type="entry name" value="SIS_dom"/>
</dbReference>
<dbReference type="InterPro" id="IPR046348">
    <property type="entry name" value="SIS_dom_sf"/>
</dbReference>
<dbReference type="NCBIfam" id="TIGR00274">
    <property type="entry name" value="N-acetylmuramic acid 6-phosphate etherase"/>
    <property type="match status" value="1"/>
</dbReference>
<dbReference type="NCBIfam" id="NF003915">
    <property type="entry name" value="PRK05441.1"/>
    <property type="match status" value="1"/>
</dbReference>
<dbReference type="NCBIfam" id="NF009222">
    <property type="entry name" value="PRK12570.1"/>
    <property type="match status" value="1"/>
</dbReference>
<dbReference type="PANTHER" id="PTHR10088">
    <property type="entry name" value="GLUCOKINASE REGULATORY PROTEIN"/>
    <property type="match status" value="1"/>
</dbReference>
<dbReference type="PANTHER" id="PTHR10088:SF4">
    <property type="entry name" value="GLUCOKINASE REGULATORY PROTEIN"/>
    <property type="match status" value="1"/>
</dbReference>
<dbReference type="Pfam" id="PF22645">
    <property type="entry name" value="GKRP_SIS_N"/>
    <property type="match status" value="1"/>
</dbReference>
<dbReference type="SUPFAM" id="SSF53697">
    <property type="entry name" value="SIS domain"/>
    <property type="match status" value="1"/>
</dbReference>
<dbReference type="PROSITE" id="PS01272">
    <property type="entry name" value="GCKR"/>
    <property type="match status" value="1"/>
</dbReference>
<dbReference type="PROSITE" id="PS51464">
    <property type="entry name" value="SIS"/>
    <property type="match status" value="1"/>
</dbReference>
<sequence length="294" mass="31979">MLENLSTEHRNEKTMNLDEMNIKEVLQSMNEEDRTVALAVEKEIEHIEKVVRVVIQSFEEEGRLIYIGAGTSGRLGILDAVECPPTFGTDDKMVQGFIAGGLKAFTKAVEGAEDREELAEEDLKSIGLNEKDTVIGIAASGRTPYVIGGLKYANSVGASTASISCNKNAEISKYAKLNVEVETGAEILTGSTRLKAGTAQKLVLNMISTASMIGVGKVYKNLMVDVQSTNEKLVERSKRIIVEATGVSYEVAAEHYEKAERNVKAAIVMVLLQCEYGEALEKLKQAKGFVKKAL</sequence>
<organism>
    <name type="scientific">Bacillus anthracis (strain A0248)</name>
    <dbReference type="NCBI Taxonomy" id="592021"/>
    <lineage>
        <taxon>Bacteria</taxon>
        <taxon>Bacillati</taxon>
        <taxon>Bacillota</taxon>
        <taxon>Bacilli</taxon>
        <taxon>Bacillales</taxon>
        <taxon>Bacillaceae</taxon>
        <taxon>Bacillus</taxon>
        <taxon>Bacillus cereus group</taxon>
    </lineage>
</organism>
<feature type="chain" id="PRO_1000118005" description="N-acetylmuramic acid 6-phosphate etherase">
    <location>
        <begin position="1"/>
        <end position="294"/>
    </location>
</feature>
<feature type="domain" description="SIS" evidence="1">
    <location>
        <begin position="54"/>
        <end position="217"/>
    </location>
</feature>
<feature type="active site" description="Proton donor" evidence="1">
    <location>
        <position position="82"/>
    </location>
</feature>
<feature type="active site" evidence="1">
    <location>
        <position position="113"/>
    </location>
</feature>
<gene>
    <name evidence="1" type="primary">murQ</name>
    <name type="ordered locus">BAA_0931</name>
</gene>
<accession>C3P1J8</accession>
<keyword id="KW-0119">Carbohydrate metabolism</keyword>
<keyword id="KW-0456">Lyase</keyword>
<reference key="1">
    <citation type="submission" date="2009-04" db="EMBL/GenBank/DDBJ databases">
        <title>Genome sequence of Bacillus anthracis A0248.</title>
        <authorList>
            <person name="Dodson R.J."/>
            <person name="Munk A.C."/>
            <person name="Bruce D."/>
            <person name="Detter C."/>
            <person name="Tapia R."/>
            <person name="Sutton G."/>
            <person name="Sims D."/>
            <person name="Brettin T."/>
        </authorList>
    </citation>
    <scope>NUCLEOTIDE SEQUENCE [LARGE SCALE GENOMIC DNA]</scope>
    <source>
        <strain>A0248</strain>
    </source>
</reference>
<comment type="function">
    <text evidence="1">Specifically catalyzes the cleavage of the D-lactyl ether substituent of MurNAc 6-phosphate, producing GlcNAc 6-phosphate and D-lactate.</text>
</comment>
<comment type="catalytic activity">
    <reaction evidence="1">
        <text>N-acetyl-D-muramate 6-phosphate + H2O = N-acetyl-D-glucosamine 6-phosphate + (R)-lactate</text>
        <dbReference type="Rhea" id="RHEA:26410"/>
        <dbReference type="ChEBI" id="CHEBI:15377"/>
        <dbReference type="ChEBI" id="CHEBI:16004"/>
        <dbReference type="ChEBI" id="CHEBI:57513"/>
        <dbReference type="ChEBI" id="CHEBI:58722"/>
        <dbReference type="EC" id="4.2.1.126"/>
    </reaction>
</comment>
<comment type="pathway">
    <text evidence="1">Amino-sugar metabolism; N-acetylmuramate degradation.</text>
</comment>
<comment type="subunit">
    <text evidence="1">Homodimer.</text>
</comment>
<comment type="miscellaneous">
    <text evidence="1">A lyase-type mechanism (elimination/hydration) is suggested for the cleavage of the lactyl ether bond of MurNAc 6-phosphate, with the formation of an alpha,beta-unsaturated aldehyde intermediate with (E)-stereochemistry, followed by the syn addition of water to give product.</text>
</comment>
<comment type="similarity">
    <text evidence="1">Belongs to the GCKR-like family. MurNAc-6-P etherase subfamily.</text>
</comment>